<name>SSK1_COCH5</name>
<organism>
    <name type="scientific">Cochliobolus heterostrophus (strain C5 / ATCC 48332 / race O)</name>
    <name type="common">Southern corn leaf blight fungus</name>
    <name type="synonym">Bipolaris maydis</name>
    <dbReference type="NCBI Taxonomy" id="701091"/>
    <lineage>
        <taxon>Eukaryota</taxon>
        <taxon>Fungi</taxon>
        <taxon>Dikarya</taxon>
        <taxon>Ascomycota</taxon>
        <taxon>Pezizomycotina</taxon>
        <taxon>Dothideomycetes</taxon>
        <taxon>Pleosporomycetidae</taxon>
        <taxon>Pleosporales</taxon>
        <taxon>Pleosporineae</taxon>
        <taxon>Pleosporaceae</taxon>
        <taxon>Bipolaris</taxon>
    </lineage>
</organism>
<feature type="chain" id="PRO_0000462273" description="Response regulator SSK1">
    <location>
        <begin position="1"/>
        <end position="788"/>
    </location>
</feature>
<feature type="domain" description="Response regulatory" evidence="2">
    <location>
        <begin position="534"/>
        <end position="691"/>
    </location>
</feature>
<feature type="modified residue" description="4-aspartylphosphate" evidence="2">
    <location>
        <position position="583"/>
    </location>
</feature>
<keyword id="KW-0963">Cytoplasm</keyword>
<keyword id="KW-0597">Phosphoprotein</keyword>
<keyword id="KW-1185">Reference proteome</keyword>
<keyword id="KW-0902">Two-component regulatory system</keyword>
<comment type="function">
    <text evidence="3">Two-domain response regulator protein in the two-component signal transduction system of the HOG1 pathway (PubMed:17158737). Controls high-osmolarity adaptation and fungicide sensitivity via its regulation of the phosphorylation of HOG1 (PubMed:17158737).</text>
</comment>
<comment type="subcellular location">
    <subcellularLocation>
        <location evidence="1">Cytoplasm</location>
    </subcellularLocation>
</comment>
<comment type="disruption phenotype">
    <text evidence="3">Shows little sensitivity to high-osmolarity stress and moderate resistance to the iprodione/fludioxonil fungicides (PubMed:17158737). Impairs phosphorylation of HOG1 under conditions of high-osmolarity stress and fungicide treatment (PubMed:17158737).</text>
</comment>
<comment type="similarity">
    <text evidence="5">Belongs to the SSK1 family.</text>
</comment>
<dbReference type="EMBL" id="KB445574">
    <property type="protein sequence ID" value="EMD92950.1"/>
    <property type="molecule type" value="Genomic_DNA"/>
</dbReference>
<dbReference type="EMBL" id="AY456027">
    <property type="protein sequence ID" value="AAR29903.1"/>
    <property type="molecule type" value="Genomic_DNA"/>
</dbReference>
<dbReference type="STRING" id="701091.M2T5U2"/>
<dbReference type="eggNOG" id="KOG0519">
    <property type="taxonomic scope" value="Eukaryota"/>
</dbReference>
<dbReference type="HOGENOM" id="CLU_008307_2_2_1"/>
<dbReference type="OMA" id="DKGMFKS"/>
<dbReference type="OrthoDB" id="24379at28556"/>
<dbReference type="Proteomes" id="UP000016936">
    <property type="component" value="Unassembled WGS sequence"/>
</dbReference>
<dbReference type="GO" id="GO:0000160">
    <property type="term" value="P:phosphorelay signal transduction system"/>
    <property type="evidence" value="ECO:0007669"/>
    <property type="project" value="UniProtKB-KW"/>
</dbReference>
<dbReference type="CDD" id="cd17546">
    <property type="entry name" value="REC_hyHK_CKI1_RcsC-like"/>
    <property type="match status" value="1"/>
</dbReference>
<dbReference type="FunFam" id="3.40.50.2300:FF:000146">
    <property type="entry name" value="Putative two-component response regulator SSK1p"/>
    <property type="match status" value="1"/>
</dbReference>
<dbReference type="Gene3D" id="3.40.50.2300">
    <property type="match status" value="1"/>
</dbReference>
<dbReference type="InterPro" id="IPR011006">
    <property type="entry name" value="CheY-like_superfamily"/>
</dbReference>
<dbReference type="InterPro" id="IPR001789">
    <property type="entry name" value="Sig_transdc_resp-reg_receiver"/>
</dbReference>
<dbReference type="PANTHER" id="PTHR45339">
    <property type="entry name" value="HYBRID SIGNAL TRANSDUCTION HISTIDINE KINASE J"/>
    <property type="match status" value="1"/>
</dbReference>
<dbReference type="PANTHER" id="PTHR45339:SF1">
    <property type="entry name" value="HYBRID SIGNAL TRANSDUCTION HISTIDINE KINASE J"/>
    <property type="match status" value="1"/>
</dbReference>
<dbReference type="Pfam" id="PF00072">
    <property type="entry name" value="Response_reg"/>
    <property type="match status" value="1"/>
</dbReference>
<dbReference type="SMART" id="SM00448">
    <property type="entry name" value="REC"/>
    <property type="match status" value="1"/>
</dbReference>
<dbReference type="SUPFAM" id="SSF52172">
    <property type="entry name" value="CheY-like"/>
    <property type="match status" value="1"/>
</dbReference>
<dbReference type="PROSITE" id="PS50110">
    <property type="entry name" value="RESPONSE_REGULATORY"/>
    <property type="match status" value="1"/>
</dbReference>
<evidence type="ECO:0000250" key="1">
    <source>
        <dbReference type="UniProtKB" id="Q07084"/>
    </source>
</evidence>
<evidence type="ECO:0000255" key="2">
    <source>
        <dbReference type="PROSITE-ProRule" id="PRU00169"/>
    </source>
</evidence>
<evidence type="ECO:0000269" key="3">
    <source>
    </source>
</evidence>
<evidence type="ECO:0000303" key="4">
    <source>
    </source>
</evidence>
<evidence type="ECO:0000305" key="5"/>
<sequence length="788" mass="84551">MSNIKTRLQKARSKFSRRNSEASTRARSIASSAGSDRHGHAPPPPLSSPLRKSVSLPRLAEPAASGKALGLGAHGDDDDDEQLLVVGRAATESQADAEASTGSLNTSRDGRSSCTQASTAPSSSHDARKPSADVPIVCPQVTLDAPTPVHPGAPPAELDRPALPDSLSSTPSSVPATTTTTATTTATTTSLPPSPARVHRHAAITTAHAADARLATNLPGPDDSQAATPSGPPPSTARSAAMLHRKIWVKRPNASATLVQIREDDLVDDVRDMILKKYANSLGRSFDAPDVTLRIVPRDSQRAGERTLGPEEDMCRTIDAYFPGGQTVHEALIIDVPSRRTPKPSPRVPPYYHHEDGIHPQTEYFPPMSAMTPSPATMSTSLQHPHDNRIPVPQLHSISVLNTGQLPNLPSPGSTRRGPMHPHRPKYNRTHTASPTTLGGGIPSSATSVRPANRPRHDSSASEAKNSAASNNPIPTPPIPADPTPHQQTLQTSTPPTPRISSPQLNTKKKRRKAPVEPPALPAGLLDGSVPPINVLIVEDNIINLRVLGAFMQRLKVRWQRAMNGKEAVTKWKAGGFHLVLMDIQLPVMNGLEATKEIRRLERVNGIGVFSSGSSEAPNTRLGSDSKSQDELREDDKLGDKGMFKSPVIIVALTASSLQSDRHEALAAGCNDFLTKPVNFVWLERKVKEWGCMQALIDFDGWRKWKDFADKSENNDTTSKLSGSFTSVAPNKKAANTSPTTATSETNGVKKDAETERKNKRKSLGVVPQPVLREEAEPQPAEVDSGDN</sequence>
<gene>
    <name evidence="4" type="primary">SSK1</name>
    <name type="ORF">COCHEDRAFT_128096</name>
</gene>
<accession>M2T5U2</accession>
<accession>Q6SLC3</accession>
<protein>
    <recommendedName>
        <fullName evidence="4">Response regulator SSK1</fullName>
    </recommendedName>
</protein>
<reference key="1">
    <citation type="journal article" date="2012" name="PLoS Pathog.">
        <title>Diverse lifestyles and strategies of plant pathogenesis encoded in the genomes of eighteen Dothideomycetes fungi.</title>
        <authorList>
            <person name="Ohm R.A."/>
            <person name="Feau N."/>
            <person name="Henrissat B."/>
            <person name="Schoch C.L."/>
            <person name="Horwitz B.A."/>
            <person name="Barry K.W."/>
            <person name="Condon B.J."/>
            <person name="Copeland A.C."/>
            <person name="Dhillon B."/>
            <person name="Glaser F."/>
            <person name="Hesse C.N."/>
            <person name="Kosti I."/>
            <person name="LaButti K."/>
            <person name="Lindquist E.A."/>
            <person name="Lucas S."/>
            <person name="Salamov A.A."/>
            <person name="Bradshaw R.E."/>
            <person name="Ciuffetti L."/>
            <person name="Hamelin R.C."/>
            <person name="Kema G.H.J."/>
            <person name="Lawrence C."/>
            <person name="Scott J.A."/>
            <person name="Spatafora J.W."/>
            <person name="Turgeon B.G."/>
            <person name="de Wit P.J.G.M."/>
            <person name="Zhong S."/>
            <person name="Goodwin S.B."/>
            <person name="Grigoriev I.V."/>
        </authorList>
    </citation>
    <scope>NUCLEOTIDE SEQUENCE [LARGE SCALE GENOMIC DNA]</scope>
    <source>
        <strain>C5 / ATCC 48332 / race O</strain>
    </source>
</reference>
<reference key="2">
    <citation type="journal article" date="2013" name="PLoS Genet.">
        <title>Comparative genome structure, secondary metabolite, and effector coding capacity across Cochliobolus pathogens.</title>
        <authorList>
            <person name="Condon B.J."/>
            <person name="Leng Y."/>
            <person name="Wu D."/>
            <person name="Bushley K.E."/>
            <person name="Ohm R.A."/>
            <person name="Otillar R."/>
            <person name="Martin J."/>
            <person name="Schackwitz W."/>
            <person name="Grimwood J."/>
            <person name="MohdZainudin N."/>
            <person name="Xue C."/>
            <person name="Wang R."/>
            <person name="Manning V.A."/>
            <person name="Dhillon B."/>
            <person name="Tu Z.J."/>
            <person name="Steffenson B.J."/>
            <person name="Salamov A."/>
            <person name="Sun H."/>
            <person name="Lowry S."/>
            <person name="LaButti K."/>
            <person name="Han J."/>
            <person name="Copeland A."/>
            <person name="Lindquist E."/>
            <person name="Barry K."/>
            <person name="Schmutz J."/>
            <person name="Baker S.E."/>
            <person name="Ciuffetti L.M."/>
            <person name="Grigoriev I.V."/>
            <person name="Zhong S."/>
            <person name="Turgeon B.G."/>
        </authorList>
    </citation>
    <scope>NUCLEOTIDE SEQUENCE [LARGE SCALE GENOMIC DNA]</scope>
    <source>
        <strain>C5 / ATCC 48332 / race O</strain>
    </source>
</reference>
<reference key="3">
    <citation type="journal article" date="2003" name="Eukaryot. Cell">
        <title>Whole-genome analysis of two-component signal transduction genes in fungal pathogens.</title>
        <authorList>
            <person name="Catlett N.L."/>
            <person name="Yoder O.C."/>
            <person name="Turgeon B.G."/>
        </authorList>
    </citation>
    <scope>NUCLEOTIDE SEQUENCE [LARGE SCALE GENOMIC DNA] OF 395-788</scope>
    <source>
        <strain>C4</strain>
    </source>
</reference>
<reference key="4">
    <citation type="journal article" date="2007" name="Eukaryot. Cell">
        <title>Two-component response regulators Ssk1p and Skn7p additively regulate high-osmolarity adaptation and fungicide sensitivity in Cochliobolus heterostrophus.</title>
        <authorList>
            <person name="Izumitsu K."/>
            <person name="Yoshimi A."/>
            <person name="Tanaka C."/>
        </authorList>
    </citation>
    <scope>FUNCTION</scope>
    <scope>DISRUPTION PHENOTYPE</scope>
</reference>
<proteinExistence type="inferred from homology"/>